<accession>Q1GTJ4</accession>
<protein>
    <recommendedName>
        <fullName evidence="1">Elongation factor P</fullName>
        <shortName evidence="1">EF-P</shortName>
    </recommendedName>
</protein>
<comment type="function">
    <text evidence="1">Involved in peptide bond synthesis. Stimulates efficient translation and peptide-bond synthesis on native or reconstituted 70S ribosomes in vitro. Probably functions indirectly by altering the affinity of the ribosome for aminoacyl-tRNA, thus increasing their reactivity as acceptors for peptidyl transferase.</text>
</comment>
<comment type="pathway">
    <text evidence="1">Protein biosynthesis; polypeptide chain elongation.</text>
</comment>
<comment type="subcellular location">
    <subcellularLocation>
        <location evidence="1">Cytoplasm</location>
    </subcellularLocation>
</comment>
<comment type="similarity">
    <text evidence="1">Belongs to the elongation factor P family.</text>
</comment>
<dbReference type="EMBL" id="CP000356">
    <property type="protein sequence ID" value="ABF53028.1"/>
    <property type="molecule type" value="Genomic_DNA"/>
</dbReference>
<dbReference type="RefSeq" id="WP_011541610.1">
    <property type="nucleotide sequence ID" value="NC_008048.1"/>
</dbReference>
<dbReference type="SMR" id="Q1GTJ4"/>
<dbReference type="STRING" id="317655.Sala_1314"/>
<dbReference type="KEGG" id="sal:Sala_1314"/>
<dbReference type="eggNOG" id="COG0231">
    <property type="taxonomic scope" value="Bacteria"/>
</dbReference>
<dbReference type="HOGENOM" id="CLU_074944_1_1_5"/>
<dbReference type="OrthoDB" id="9801844at2"/>
<dbReference type="UniPathway" id="UPA00345"/>
<dbReference type="Proteomes" id="UP000006578">
    <property type="component" value="Chromosome"/>
</dbReference>
<dbReference type="GO" id="GO:0005737">
    <property type="term" value="C:cytoplasm"/>
    <property type="evidence" value="ECO:0007669"/>
    <property type="project" value="UniProtKB-SubCell"/>
</dbReference>
<dbReference type="GO" id="GO:0003746">
    <property type="term" value="F:translation elongation factor activity"/>
    <property type="evidence" value="ECO:0007669"/>
    <property type="project" value="UniProtKB-UniRule"/>
</dbReference>
<dbReference type="GO" id="GO:0043043">
    <property type="term" value="P:peptide biosynthetic process"/>
    <property type="evidence" value="ECO:0007669"/>
    <property type="project" value="InterPro"/>
</dbReference>
<dbReference type="CDD" id="cd04470">
    <property type="entry name" value="S1_EF-P_repeat_1"/>
    <property type="match status" value="1"/>
</dbReference>
<dbReference type="CDD" id="cd05794">
    <property type="entry name" value="S1_EF-P_repeat_2"/>
    <property type="match status" value="1"/>
</dbReference>
<dbReference type="FunFam" id="2.30.30.30:FF:000003">
    <property type="entry name" value="Elongation factor P"/>
    <property type="match status" value="1"/>
</dbReference>
<dbReference type="FunFam" id="2.40.50.140:FF:000004">
    <property type="entry name" value="Elongation factor P"/>
    <property type="match status" value="1"/>
</dbReference>
<dbReference type="FunFam" id="2.40.50.140:FF:000009">
    <property type="entry name" value="Elongation factor P"/>
    <property type="match status" value="1"/>
</dbReference>
<dbReference type="Gene3D" id="2.30.30.30">
    <property type="match status" value="1"/>
</dbReference>
<dbReference type="Gene3D" id="2.40.50.140">
    <property type="entry name" value="Nucleic acid-binding proteins"/>
    <property type="match status" value="2"/>
</dbReference>
<dbReference type="HAMAP" id="MF_00141">
    <property type="entry name" value="EF_P"/>
    <property type="match status" value="1"/>
</dbReference>
<dbReference type="InterPro" id="IPR015365">
    <property type="entry name" value="Elong-fact-P_C"/>
</dbReference>
<dbReference type="InterPro" id="IPR012340">
    <property type="entry name" value="NA-bd_OB-fold"/>
</dbReference>
<dbReference type="InterPro" id="IPR014722">
    <property type="entry name" value="Rib_uL2_dom2"/>
</dbReference>
<dbReference type="InterPro" id="IPR020599">
    <property type="entry name" value="Transl_elong_fac_P/YeiP"/>
</dbReference>
<dbReference type="InterPro" id="IPR013185">
    <property type="entry name" value="Transl_elong_KOW-like"/>
</dbReference>
<dbReference type="InterPro" id="IPR001059">
    <property type="entry name" value="Transl_elong_P/YeiP_cen"/>
</dbReference>
<dbReference type="InterPro" id="IPR013852">
    <property type="entry name" value="Transl_elong_P/YeiP_CS"/>
</dbReference>
<dbReference type="InterPro" id="IPR011768">
    <property type="entry name" value="Transl_elongation_fac_P"/>
</dbReference>
<dbReference type="InterPro" id="IPR008991">
    <property type="entry name" value="Translation_prot_SH3-like_sf"/>
</dbReference>
<dbReference type="NCBIfam" id="TIGR00038">
    <property type="entry name" value="efp"/>
    <property type="match status" value="1"/>
</dbReference>
<dbReference type="NCBIfam" id="NF001810">
    <property type="entry name" value="PRK00529.1"/>
    <property type="match status" value="1"/>
</dbReference>
<dbReference type="PANTHER" id="PTHR30053">
    <property type="entry name" value="ELONGATION FACTOR P"/>
    <property type="match status" value="1"/>
</dbReference>
<dbReference type="PANTHER" id="PTHR30053:SF14">
    <property type="entry name" value="TRANSLATION ELONGATION FACTOR KOW-LIKE DOMAIN-CONTAINING PROTEIN"/>
    <property type="match status" value="1"/>
</dbReference>
<dbReference type="Pfam" id="PF01132">
    <property type="entry name" value="EFP"/>
    <property type="match status" value="1"/>
</dbReference>
<dbReference type="Pfam" id="PF08207">
    <property type="entry name" value="EFP_N"/>
    <property type="match status" value="1"/>
</dbReference>
<dbReference type="Pfam" id="PF09285">
    <property type="entry name" value="Elong-fact-P_C"/>
    <property type="match status" value="1"/>
</dbReference>
<dbReference type="PIRSF" id="PIRSF005901">
    <property type="entry name" value="EF-P"/>
    <property type="match status" value="1"/>
</dbReference>
<dbReference type="SMART" id="SM01185">
    <property type="entry name" value="EFP"/>
    <property type="match status" value="1"/>
</dbReference>
<dbReference type="SMART" id="SM00841">
    <property type="entry name" value="Elong-fact-P_C"/>
    <property type="match status" value="1"/>
</dbReference>
<dbReference type="SUPFAM" id="SSF50249">
    <property type="entry name" value="Nucleic acid-binding proteins"/>
    <property type="match status" value="2"/>
</dbReference>
<dbReference type="SUPFAM" id="SSF50104">
    <property type="entry name" value="Translation proteins SH3-like domain"/>
    <property type="match status" value="1"/>
</dbReference>
<dbReference type="PROSITE" id="PS01275">
    <property type="entry name" value="EFP"/>
    <property type="match status" value="1"/>
</dbReference>
<reference key="1">
    <citation type="journal article" date="2009" name="Proc. Natl. Acad. Sci. U.S.A.">
        <title>The genomic basis of trophic strategy in marine bacteria.</title>
        <authorList>
            <person name="Lauro F.M."/>
            <person name="McDougald D."/>
            <person name="Thomas T."/>
            <person name="Williams T.J."/>
            <person name="Egan S."/>
            <person name="Rice S."/>
            <person name="DeMaere M.Z."/>
            <person name="Ting L."/>
            <person name="Ertan H."/>
            <person name="Johnson J."/>
            <person name="Ferriera S."/>
            <person name="Lapidus A."/>
            <person name="Anderson I."/>
            <person name="Kyrpides N."/>
            <person name="Munk A.C."/>
            <person name="Detter C."/>
            <person name="Han C.S."/>
            <person name="Brown M.V."/>
            <person name="Robb F.T."/>
            <person name="Kjelleberg S."/>
            <person name="Cavicchioli R."/>
        </authorList>
    </citation>
    <scope>NUCLEOTIDE SEQUENCE [LARGE SCALE GENOMIC DNA]</scope>
    <source>
        <strain>DSM 13593 / LMG 18877 / RB2256</strain>
    </source>
</reference>
<evidence type="ECO:0000255" key="1">
    <source>
        <dbReference type="HAMAP-Rule" id="MF_00141"/>
    </source>
</evidence>
<organism>
    <name type="scientific">Sphingopyxis alaskensis (strain DSM 13593 / LMG 18877 / RB2256)</name>
    <name type="common">Sphingomonas alaskensis</name>
    <dbReference type="NCBI Taxonomy" id="317655"/>
    <lineage>
        <taxon>Bacteria</taxon>
        <taxon>Pseudomonadati</taxon>
        <taxon>Pseudomonadota</taxon>
        <taxon>Alphaproteobacteria</taxon>
        <taxon>Sphingomonadales</taxon>
        <taxon>Sphingomonadaceae</taxon>
        <taxon>Sphingopyxis</taxon>
    </lineage>
</organism>
<name>EFP_SPHAL</name>
<feature type="chain" id="PRO_1000010862" description="Elongation factor P">
    <location>
        <begin position="1"/>
        <end position="187"/>
    </location>
</feature>
<keyword id="KW-0963">Cytoplasm</keyword>
<keyword id="KW-0251">Elongation factor</keyword>
<keyword id="KW-0648">Protein biosynthesis</keyword>
<keyword id="KW-1185">Reference proteome</keyword>
<gene>
    <name evidence="1" type="primary">efp</name>
    <name type="ordered locus">Sala_1314</name>
</gene>
<proteinExistence type="inferred from homology"/>
<sequence length="187" mass="21086">MKITGVEIRPGNIIEFEGGIWKVTKIQHTQPGKGGAYMQVEAKNLIDGRKLNNRFRSADTVEKVRLDTKDFQYLYAEGDDLVFMDKDTYEQITIGKDVVGEAHEFLQDGMDVVLELWEERPISVELPEQIEATIVEADAVVKGQTASSSYKPAILDNGVRVMVPPHITSGTRIVVNVYDREYVRRAD</sequence>